<feature type="chain" id="PRO_0000079032" description="Nucleoprotein">
    <location>
        <begin position="1"/>
        <end position="498"/>
    </location>
</feature>
<feature type="region of interest" description="Disordered" evidence="2">
    <location>
        <begin position="1"/>
        <end position="21"/>
    </location>
</feature>
<feature type="short sequence motif" description="Unconventional nuclear localization signal" evidence="1">
    <location>
        <begin position="1"/>
        <end position="18"/>
    </location>
</feature>
<feature type="short sequence motif" description="Bipartite nuclear localization signal" evidence="1">
    <location>
        <begin position="198"/>
        <end position="216"/>
    </location>
</feature>
<evidence type="ECO:0000255" key="1">
    <source>
        <dbReference type="HAMAP-Rule" id="MF_04070"/>
    </source>
</evidence>
<evidence type="ECO:0000256" key="2">
    <source>
        <dbReference type="SAM" id="MobiDB-lite"/>
    </source>
</evidence>
<protein>
    <recommendedName>
        <fullName evidence="1">Nucleoprotein</fullName>
    </recommendedName>
    <alternativeName>
        <fullName evidence="1">Nucleocapsid protein</fullName>
        <shortName evidence="1">Protein N</shortName>
    </alternativeName>
</protein>
<sequence length="498" mass="56284">MASQGTKRSYEQMETGGERQNATEIRASVGRMVGGIGRFYIQMCTELKLSDYEGRLIQNSITIERMVLSAFDERRNKYLEEHPSAGKDPKKTGGPIYRRRDGKWMRELILYDKEEIRRIWRQANNGEDATAGLTHLMIWHSNLNDATYQRTRALVRTGMDPRMCSLMQGSTLPRRSGAAGAAVKGVGTMVMELIRMIKRGINDRNFWRGENGRRTRIAYERMCNILKGKFQTAAQRAMMDQVRESRNPGNAEIEDLIFLARSALILRGSVAHKSCLPACVYGLAVASGYDFEREGYSLVGIDPFRLLQNSQVFSLIRPNENPAHKSQLVWMACHSAAFEDLRVSSFIRGTRVVPRGQLSTRGVQIASNENMETMDSSTLELRSRYWAIRTRSGGNTNQQRASAGQISVQPTFSVQRNLPFERATIMAAFTGNTEGRTSDMRTEIIRMMESARPEDVSFQGRGVFELSDEKATNPIVPSFDMSNEGSYFFGDNAEEYDN</sequence>
<keyword id="KW-0167">Capsid protein</keyword>
<keyword id="KW-1139">Helical capsid protein</keyword>
<keyword id="KW-1048">Host nucleus</keyword>
<keyword id="KW-0945">Host-virus interaction</keyword>
<keyword id="KW-0687">Ribonucleoprotein</keyword>
<keyword id="KW-0694">RNA-binding</keyword>
<keyword id="KW-0543">Viral nucleoprotein</keyword>
<keyword id="KW-1163">Viral penetration into host nucleus</keyword>
<keyword id="KW-0946">Virion</keyword>
<keyword id="KW-1160">Virus entry into host cell</keyword>
<dbReference type="EMBL" id="M22574">
    <property type="protein sequence ID" value="AAA43095.1"/>
    <property type="molecule type" value="Genomic_RNA"/>
</dbReference>
<dbReference type="SMR" id="P69299"/>
<dbReference type="GO" id="GO:0019029">
    <property type="term" value="C:helical viral capsid"/>
    <property type="evidence" value="ECO:0007669"/>
    <property type="project" value="UniProtKB-UniRule"/>
</dbReference>
<dbReference type="GO" id="GO:0043657">
    <property type="term" value="C:host cell"/>
    <property type="evidence" value="ECO:0007669"/>
    <property type="project" value="GOC"/>
</dbReference>
<dbReference type="GO" id="GO:0042025">
    <property type="term" value="C:host cell nucleus"/>
    <property type="evidence" value="ECO:0007669"/>
    <property type="project" value="UniProtKB-SubCell"/>
</dbReference>
<dbReference type="GO" id="GO:1990904">
    <property type="term" value="C:ribonucleoprotein complex"/>
    <property type="evidence" value="ECO:0007669"/>
    <property type="project" value="UniProtKB-KW"/>
</dbReference>
<dbReference type="GO" id="GO:0019013">
    <property type="term" value="C:viral nucleocapsid"/>
    <property type="evidence" value="ECO:0007669"/>
    <property type="project" value="UniProtKB-UniRule"/>
</dbReference>
<dbReference type="GO" id="GO:0003723">
    <property type="term" value="F:RNA binding"/>
    <property type="evidence" value="ECO:0007669"/>
    <property type="project" value="UniProtKB-UniRule"/>
</dbReference>
<dbReference type="GO" id="GO:0005198">
    <property type="term" value="F:structural molecule activity"/>
    <property type="evidence" value="ECO:0007669"/>
    <property type="project" value="UniProtKB-UniRule"/>
</dbReference>
<dbReference type="GO" id="GO:0046718">
    <property type="term" value="P:symbiont entry into host cell"/>
    <property type="evidence" value="ECO:0007669"/>
    <property type="project" value="UniProtKB-KW"/>
</dbReference>
<dbReference type="GO" id="GO:0075732">
    <property type="term" value="P:viral penetration into host nucleus"/>
    <property type="evidence" value="ECO:0007669"/>
    <property type="project" value="UniProtKB-UniRule"/>
</dbReference>
<dbReference type="HAMAP" id="MF_04070">
    <property type="entry name" value="INFV_NCAP"/>
    <property type="match status" value="1"/>
</dbReference>
<dbReference type="InterPro" id="IPR002141">
    <property type="entry name" value="Flu_NP"/>
</dbReference>
<dbReference type="Pfam" id="PF00506">
    <property type="entry name" value="Flu_NP"/>
    <property type="match status" value="1"/>
</dbReference>
<dbReference type="SUPFAM" id="SSF161003">
    <property type="entry name" value="flu NP-like"/>
    <property type="match status" value="1"/>
</dbReference>
<organismHost>
    <name type="scientific">Aves</name>
    <dbReference type="NCBI Taxonomy" id="8782"/>
</organismHost>
<organismHost>
    <name type="scientific">Homo sapiens</name>
    <name type="common">Human</name>
    <dbReference type="NCBI Taxonomy" id="9606"/>
</organismHost>
<organismHost>
    <name type="scientific">Sus scrofa</name>
    <name type="common">Pig</name>
    <dbReference type="NCBI Taxonomy" id="9823"/>
</organismHost>
<comment type="function">
    <text evidence="1">Encapsidates the negative strand viral RNA, protecting it from nucleases. The encapsidated genomic RNA is termed the ribonucleoprotein (RNP) and serves as template for transcription and replication. The RNP needs to be localized in the host nucleus to start an infectious cycle, but is too large to diffuse through the nuclear pore complex. NP comprises at least 2 nuclear localization signals that are responsible for the active RNP import into the nucleus through cellular importin alpha/beta pathway. Later in the infection, nclear export of RNPs are mediated through viral proteins NEP interacting with M1 which binds nucleoproteins. It is possible that nucleoprotein binds directly host exportin-1/XPO1 and plays an active role in RNPs nuclear export. M1 interaction with RNP seems to hide nucleoprotein's nuclear localization signals. Soon after a virion infects a new cell, M1 dissociates from the RNP under acidification of the virion driven by M2 protein. Dissociation of M1 from RNP unmasks nucleoprotein's nuclear localization signals, targeting the RNP to the nucleus.</text>
</comment>
<comment type="subunit">
    <text evidence="1">Homomultimerizes to form the nucleocapsid. May bind host exportin-1/XPO1. Binds to viral genomic RNA. Protein-RNA contacts are mediated by a combination of electrostatic interactions between positively charged residues and the phosphate backbone and planar interactions between aromatic side chains and bases.</text>
</comment>
<comment type="subcellular location">
    <subcellularLocation>
        <location evidence="1">Virion</location>
    </subcellularLocation>
    <subcellularLocation>
        <location evidence="1">Host nucleus</location>
    </subcellularLocation>
</comment>
<comment type="PTM">
    <text evidence="1">Late in virus-infected cells, may be cleaved from a 56-kDa protein to a 53-kDa protein by a cellular caspase. This cleavage might be a marker for the onset of apoptosis in infected cells or have a specific function in virus host interaction.</text>
</comment>
<comment type="similarity">
    <text evidence="1">Belongs to the influenza viruses nucleoprotein family.</text>
</comment>
<proteinExistence type="inferred from homology"/>
<reference key="1">
    <citation type="journal article" date="1989" name="Virology">
        <title>Two subtypes of nucleoproteins (NP) of influenza A viruses.</title>
        <authorList>
            <person name="Gammelin M."/>
            <person name="Mandler J."/>
            <person name="Scholtissek C."/>
        </authorList>
    </citation>
    <scope>NUCLEOTIDE SEQUENCE [GENOMIC RNA]</scope>
</reference>
<accession>P69299</accession>
<accession>P15675</accession>
<accession>P16977</accession>
<gene>
    <name evidence="1" type="primary">NP</name>
</gene>
<name>NCAP_I77A3</name>
<organism>
    <name type="scientific">Influenza A virus (strain A/Duck/Bavaria/2/1977 H1N1)</name>
    <dbReference type="NCBI Taxonomy" id="387203"/>
    <lineage>
        <taxon>Viruses</taxon>
        <taxon>Riboviria</taxon>
        <taxon>Orthornavirae</taxon>
        <taxon>Negarnaviricota</taxon>
        <taxon>Polyploviricotina</taxon>
        <taxon>Insthoviricetes</taxon>
        <taxon>Articulavirales</taxon>
        <taxon>Orthomyxoviridae</taxon>
        <taxon>Alphainfluenzavirus</taxon>
        <taxon>Alphainfluenzavirus influenzae</taxon>
        <taxon>Influenza A virus</taxon>
    </lineage>
</organism>